<gene>
    <name type="primary">psaB</name>
    <name type="ordered locus">YPO1304</name>
    <name type="ordered locus">y2881</name>
    <name type="ordered locus">YP_1288</name>
</gene>
<protein>
    <recommendedName>
        <fullName>Chaperone protein PsaB</fullName>
    </recommendedName>
</protein>
<proteinExistence type="inferred from homology"/>
<evidence type="ECO:0000250" key="1"/>
<evidence type="ECO:0000255" key="2"/>
<evidence type="ECO:0000305" key="3"/>
<name>PSAB_YERPE</name>
<organism>
    <name type="scientific">Yersinia pestis</name>
    <dbReference type="NCBI Taxonomy" id="632"/>
    <lineage>
        <taxon>Bacteria</taxon>
        <taxon>Pseudomonadati</taxon>
        <taxon>Pseudomonadota</taxon>
        <taxon>Gammaproteobacteria</taxon>
        <taxon>Enterobacterales</taxon>
        <taxon>Yersiniaceae</taxon>
        <taxon>Yersinia</taxon>
    </lineage>
</organism>
<reference key="1">
    <citation type="journal article" date="1993" name="Mol. Microbiol.">
        <title>Yersinia pestis pH 6 antigen forms fimbriae and is induced by intracellular association with macrophages.</title>
        <authorList>
            <person name="Lindler L.E."/>
            <person name="Tall B.D."/>
        </authorList>
    </citation>
    <scope>NUCLEOTIDE SEQUENCE [GENOMIC DNA]</scope>
    <source>
        <strain>KIM5 / Biovar Mediaevalis</strain>
    </source>
</reference>
<reference key="2">
    <citation type="submission" date="1996-05" db="EMBL/GenBank/DDBJ databases">
        <authorList>
            <person name="Cherepavov P.A."/>
        </authorList>
    </citation>
    <scope>NUCLEOTIDE SEQUENCE [GENOMIC DNA]</scope>
    <source>
        <strain>EV 76</strain>
    </source>
</reference>
<reference key="3">
    <citation type="submission" date="2006-10" db="EMBL/GenBank/DDBJ databases">
        <title>Yersinia pestis DNA for pH6 antigen.</title>
        <authorList>
            <person name="Bannov V.A."/>
            <person name="Panfertsev E.A."/>
            <person name="Amoako K.K."/>
            <person name="Perry R.D."/>
            <person name="Filippov A.A."/>
            <person name="Anisimov A.P."/>
        </authorList>
    </citation>
    <scope>NUCLEOTIDE SEQUENCE [GENOMIC DNA]</scope>
    <source>
        <strain>231</strain>
    </source>
</reference>
<reference key="4">
    <citation type="journal article" date="2001" name="Nature">
        <title>Genome sequence of Yersinia pestis, the causative agent of plague.</title>
        <authorList>
            <person name="Parkhill J."/>
            <person name="Wren B.W."/>
            <person name="Thomson N.R."/>
            <person name="Titball R.W."/>
            <person name="Holden M.T.G."/>
            <person name="Prentice M.B."/>
            <person name="Sebaihia M."/>
            <person name="James K.D."/>
            <person name="Churcher C.M."/>
            <person name="Mungall K.L."/>
            <person name="Baker S."/>
            <person name="Basham D."/>
            <person name="Bentley S.D."/>
            <person name="Brooks K."/>
            <person name="Cerdeno-Tarraga A.-M."/>
            <person name="Chillingworth T."/>
            <person name="Cronin A."/>
            <person name="Davies R.M."/>
            <person name="Davis P."/>
            <person name="Dougan G."/>
            <person name="Feltwell T."/>
            <person name="Hamlin N."/>
            <person name="Holroyd S."/>
            <person name="Jagels K."/>
            <person name="Karlyshev A.V."/>
            <person name="Leather S."/>
            <person name="Moule S."/>
            <person name="Oyston P.C.F."/>
            <person name="Quail M.A."/>
            <person name="Rutherford K.M."/>
            <person name="Simmonds M."/>
            <person name="Skelton J."/>
            <person name="Stevens K."/>
            <person name="Whitehead S."/>
            <person name="Barrell B.G."/>
        </authorList>
    </citation>
    <scope>NUCLEOTIDE SEQUENCE [LARGE SCALE GENOMIC DNA]</scope>
    <source>
        <strain>CO-92 / Biovar Orientalis</strain>
    </source>
</reference>
<reference key="5">
    <citation type="journal article" date="2002" name="J. Bacteriol.">
        <title>Genome sequence of Yersinia pestis KIM.</title>
        <authorList>
            <person name="Deng W."/>
            <person name="Burland V."/>
            <person name="Plunkett G. III"/>
            <person name="Boutin A."/>
            <person name="Mayhew G.F."/>
            <person name="Liss P."/>
            <person name="Perna N.T."/>
            <person name="Rose D.J."/>
            <person name="Mau B."/>
            <person name="Zhou S."/>
            <person name="Schwartz D.C."/>
            <person name="Fetherston J.D."/>
            <person name="Lindler L.E."/>
            <person name="Brubaker R.R."/>
            <person name="Plano G.V."/>
            <person name="Straley S.C."/>
            <person name="McDonough K.A."/>
            <person name="Nilles M.L."/>
            <person name="Matson J.S."/>
            <person name="Blattner F.R."/>
            <person name="Perry R.D."/>
        </authorList>
    </citation>
    <scope>NUCLEOTIDE SEQUENCE [LARGE SCALE GENOMIC DNA]</scope>
    <source>
        <strain>KIM10+ / Biovar Mediaevalis</strain>
    </source>
</reference>
<reference key="6">
    <citation type="journal article" date="2004" name="DNA Res.">
        <title>Complete genome sequence of Yersinia pestis strain 91001, an isolate avirulent to humans.</title>
        <authorList>
            <person name="Song Y."/>
            <person name="Tong Z."/>
            <person name="Wang J."/>
            <person name="Wang L."/>
            <person name="Guo Z."/>
            <person name="Han Y."/>
            <person name="Zhang J."/>
            <person name="Pei D."/>
            <person name="Zhou D."/>
            <person name="Qin H."/>
            <person name="Pang X."/>
            <person name="Han Y."/>
            <person name="Zhai J."/>
            <person name="Li M."/>
            <person name="Cui B."/>
            <person name="Qi Z."/>
            <person name="Jin L."/>
            <person name="Dai R."/>
            <person name="Chen F."/>
            <person name="Li S."/>
            <person name="Ye C."/>
            <person name="Du Z."/>
            <person name="Lin W."/>
            <person name="Wang J."/>
            <person name="Yu J."/>
            <person name="Yang H."/>
            <person name="Wang J."/>
            <person name="Huang P."/>
            <person name="Yang R."/>
        </authorList>
    </citation>
    <scope>NUCLEOTIDE SEQUENCE [LARGE SCALE GENOMIC DNA]</scope>
    <source>
        <strain>91001 / Biovar Mediaevalis</strain>
    </source>
</reference>
<dbReference type="EMBL" id="M86713">
    <property type="protein sequence ID" value="AAA27663.1"/>
    <property type="status" value="ALT_INIT"/>
    <property type="molecule type" value="Genomic_DNA"/>
</dbReference>
<dbReference type="EMBL" id="X97759">
    <property type="protein sequence ID" value="CAA66356.1"/>
    <property type="molecule type" value="Genomic_DNA"/>
</dbReference>
<dbReference type="EMBL" id="EF079883">
    <property type="protein sequence ID" value="ABK63798.1"/>
    <property type="molecule type" value="Genomic_DNA"/>
</dbReference>
<dbReference type="EMBL" id="AL590842">
    <property type="protein sequence ID" value="CAL19957.1"/>
    <property type="molecule type" value="Genomic_DNA"/>
</dbReference>
<dbReference type="EMBL" id="AE009952">
    <property type="protein sequence ID" value="AAM86432.1"/>
    <property type="molecule type" value="Genomic_DNA"/>
</dbReference>
<dbReference type="EMBL" id="AE017042">
    <property type="protein sequence ID" value="AAS61531.1"/>
    <property type="molecule type" value="Genomic_DNA"/>
</dbReference>
<dbReference type="PIR" id="AC0159">
    <property type="entry name" value="AC0159"/>
</dbReference>
<dbReference type="PIR" id="S32927">
    <property type="entry name" value="S32927"/>
</dbReference>
<dbReference type="RefSeq" id="WP_002208793.1">
    <property type="nucleotide sequence ID" value="NZ_WUCM01000013.1"/>
</dbReference>
<dbReference type="RefSeq" id="YP_002346329.1">
    <property type="nucleotide sequence ID" value="NC_003143.1"/>
</dbReference>
<dbReference type="SMR" id="P69965"/>
<dbReference type="STRING" id="214092.YPO1304"/>
<dbReference type="PaxDb" id="214092-YPO1304"/>
<dbReference type="DNASU" id="1147828"/>
<dbReference type="EnsemblBacteria" id="AAS61531">
    <property type="protein sequence ID" value="AAS61531"/>
    <property type="gene ID" value="YP_1288"/>
</dbReference>
<dbReference type="GeneID" id="57977436"/>
<dbReference type="KEGG" id="ype:YPO1304"/>
<dbReference type="KEGG" id="ypk:y2881"/>
<dbReference type="KEGG" id="ypm:YP_1288"/>
<dbReference type="PATRIC" id="fig|214092.21.peg.1614"/>
<dbReference type="eggNOG" id="COG3121">
    <property type="taxonomic scope" value="Bacteria"/>
</dbReference>
<dbReference type="HOGENOM" id="CLU_070768_2_2_6"/>
<dbReference type="OMA" id="MVMPPLF"/>
<dbReference type="OrthoDB" id="9131059at2"/>
<dbReference type="Proteomes" id="UP000000815">
    <property type="component" value="Chromosome"/>
</dbReference>
<dbReference type="Proteomes" id="UP000001019">
    <property type="component" value="Chromosome"/>
</dbReference>
<dbReference type="Proteomes" id="UP000002490">
    <property type="component" value="Chromosome"/>
</dbReference>
<dbReference type="GO" id="GO:0030288">
    <property type="term" value="C:outer membrane-bounded periplasmic space"/>
    <property type="evidence" value="ECO:0000318"/>
    <property type="project" value="GO_Central"/>
</dbReference>
<dbReference type="GO" id="GO:0044183">
    <property type="term" value="F:protein folding chaperone"/>
    <property type="evidence" value="ECO:0000318"/>
    <property type="project" value="GO_Central"/>
</dbReference>
<dbReference type="GO" id="GO:0071555">
    <property type="term" value="P:cell wall organization"/>
    <property type="evidence" value="ECO:0007669"/>
    <property type="project" value="InterPro"/>
</dbReference>
<dbReference type="GO" id="GO:0061077">
    <property type="term" value="P:chaperone-mediated protein folding"/>
    <property type="evidence" value="ECO:0000318"/>
    <property type="project" value="GO_Central"/>
</dbReference>
<dbReference type="Gene3D" id="2.60.40.10">
    <property type="entry name" value="Immunoglobulins"/>
    <property type="match status" value="2"/>
</dbReference>
<dbReference type="InterPro" id="IPR013783">
    <property type="entry name" value="Ig-like_fold"/>
</dbReference>
<dbReference type="InterPro" id="IPR008962">
    <property type="entry name" value="PapD-like_sf"/>
</dbReference>
<dbReference type="InterPro" id="IPR050643">
    <property type="entry name" value="Periplasmic_pilus_chap"/>
</dbReference>
<dbReference type="InterPro" id="IPR036316">
    <property type="entry name" value="Pili_assmbl_chap_C_dom_sf"/>
</dbReference>
<dbReference type="InterPro" id="IPR001829">
    <property type="entry name" value="Pili_assmbl_chaperone_bac"/>
</dbReference>
<dbReference type="InterPro" id="IPR016148">
    <property type="entry name" value="Pili_assmbl_chaperone_C"/>
</dbReference>
<dbReference type="InterPro" id="IPR018046">
    <property type="entry name" value="Pili_assmbl_chaperone_CS"/>
</dbReference>
<dbReference type="InterPro" id="IPR016147">
    <property type="entry name" value="Pili_assmbl_chaperone_N"/>
</dbReference>
<dbReference type="PANTHER" id="PTHR30251:SF9">
    <property type="entry name" value="CHAPERONE PROTEIN CAF1M"/>
    <property type="match status" value="1"/>
</dbReference>
<dbReference type="PANTHER" id="PTHR30251">
    <property type="entry name" value="PILUS ASSEMBLY CHAPERONE"/>
    <property type="match status" value="1"/>
</dbReference>
<dbReference type="Pfam" id="PF02753">
    <property type="entry name" value="PapD_C"/>
    <property type="match status" value="1"/>
</dbReference>
<dbReference type="Pfam" id="PF00345">
    <property type="entry name" value="PapD_N"/>
    <property type="match status" value="1"/>
</dbReference>
<dbReference type="PRINTS" id="PR00969">
    <property type="entry name" value="CHAPERONPILI"/>
</dbReference>
<dbReference type="SUPFAM" id="SSF49354">
    <property type="entry name" value="PapD-like"/>
    <property type="match status" value="1"/>
</dbReference>
<dbReference type="SUPFAM" id="SSF49584">
    <property type="entry name" value="Periplasmic chaperone C-domain"/>
    <property type="match status" value="1"/>
</dbReference>
<dbReference type="PROSITE" id="PS00635">
    <property type="entry name" value="PILI_CHAPERONE"/>
    <property type="match status" value="1"/>
</dbReference>
<sequence>MKNLFFSAYKKVFSYITSIVIFMVSLPYAYSQDVVVNTTKHLFTVKIGTTRVIYPSSSTKGVSVSVANPQDYPILVQTQVKDEDKTSPAPFIVTPPLFRLDAGLQGRVRIIRTGGKFPEDRETLQWLCLTGIPPKNGDAWGNTQNNPKNSSPTMDIQMSISTCIKLLFRPDKVKGDPTDSADSLTWRYKGNYLEVNNPTPFYMNFYSLRIGDEKINLSDLGSKDEIKNGSYVPPFSSRDFIIPVKNKGKATEVFWQVINDNGGVSREFKSTVQ</sequence>
<feature type="signal peptide" evidence="2">
    <location>
        <begin position="1"/>
        <end position="31"/>
    </location>
</feature>
<feature type="chain" id="PRO_0000009287" description="Chaperone protein PsaB">
    <location>
        <begin position="32"/>
        <end position="273"/>
    </location>
</feature>
<feature type="disulfide bond" evidence="2">
    <location>
        <begin position="128"/>
        <end position="163"/>
    </location>
</feature>
<feature type="sequence conflict" description="In Ref. 2; CAA66356." evidence="3" ref="2">
    <original>E</original>
    <variation>D</variation>
    <location>
        <position position="252"/>
    </location>
</feature>
<comment type="function">
    <text>Required for the biogenesis of the pH 6 antigen.</text>
</comment>
<comment type="subcellular location">
    <subcellularLocation>
        <location evidence="1">Periplasm</location>
    </subcellularLocation>
</comment>
<comment type="similarity">
    <text evidence="3">Belongs to the periplasmic pilus chaperone family.</text>
</comment>
<comment type="caution">
    <text evidence="3">It is uncertain whether Met-1 or Met-23 is the initiator.</text>
</comment>
<comment type="sequence caution" evidence="3">
    <conflict type="erroneous initiation">
        <sequence resource="EMBL-CDS" id="AAA27663"/>
    </conflict>
</comment>
<accession>P69965</accession>
<accession>P31523</accession>
<accession>Q0WHA9</accession>
<accession>Q56979</accession>
<accession>Q66CR7</accession>
<keyword id="KW-0143">Chaperone</keyword>
<keyword id="KW-1015">Disulfide bond</keyword>
<keyword id="KW-0393">Immunoglobulin domain</keyword>
<keyword id="KW-0574">Periplasm</keyword>
<keyword id="KW-1185">Reference proteome</keyword>
<keyword id="KW-0732">Signal</keyword>